<feature type="transit peptide" description="Mitochondrion" evidence="1">
    <location>
        <begin position="1"/>
        <end position="33"/>
    </location>
</feature>
<feature type="chain" id="PRO_0000385543" description="Elongation factor G, mitochondrial">
    <location>
        <begin position="34"/>
        <end position="744"/>
    </location>
</feature>
<feature type="domain" description="tr-type G">
    <location>
        <begin position="39"/>
        <end position="317"/>
    </location>
</feature>
<feature type="binding site" evidence="1">
    <location>
        <begin position="48"/>
        <end position="55"/>
    </location>
    <ligand>
        <name>GTP</name>
        <dbReference type="ChEBI" id="CHEBI:37565"/>
    </ligand>
</feature>
<feature type="binding site" evidence="1">
    <location>
        <begin position="115"/>
        <end position="119"/>
    </location>
    <ligand>
        <name>GTP</name>
        <dbReference type="ChEBI" id="CHEBI:37565"/>
    </ligand>
</feature>
<feature type="binding site" evidence="1">
    <location>
        <begin position="169"/>
        <end position="172"/>
    </location>
    <ligand>
        <name>GTP</name>
        <dbReference type="ChEBI" id="CHEBI:37565"/>
    </ligand>
</feature>
<gene>
    <name type="ORF">AGAP009737</name>
</gene>
<proteinExistence type="inferred from homology"/>
<evidence type="ECO:0000255" key="1">
    <source>
        <dbReference type="HAMAP-Rule" id="MF_03061"/>
    </source>
</evidence>
<evidence type="ECO:0000305" key="2"/>
<organism>
    <name type="scientific">Anopheles gambiae</name>
    <name type="common">African malaria mosquito</name>
    <dbReference type="NCBI Taxonomy" id="7165"/>
    <lineage>
        <taxon>Eukaryota</taxon>
        <taxon>Metazoa</taxon>
        <taxon>Ecdysozoa</taxon>
        <taxon>Arthropoda</taxon>
        <taxon>Hexapoda</taxon>
        <taxon>Insecta</taxon>
        <taxon>Pterygota</taxon>
        <taxon>Neoptera</taxon>
        <taxon>Endopterygota</taxon>
        <taxon>Diptera</taxon>
        <taxon>Nematocera</taxon>
        <taxon>Culicoidea</taxon>
        <taxon>Culicidae</taxon>
        <taxon>Anophelinae</taxon>
        <taxon>Anopheles</taxon>
    </lineage>
</organism>
<name>EFGM_ANOGA</name>
<dbReference type="EMBL" id="AAAB01008980">
    <property type="protein sequence ID" value="EAA13808.4"/>
    <property type="molecule type" value="Genomic_DNA"/>
</dbReference>
<dbReference type="RefSeq" id="XP_318822.4">
    <property type="nucleotide sequence ID" value="XM_318822.4"/>
</dbReference>
<dbReference type="SMR" id="Q7Q1K8"/>
<dbReference type="FunCoup" id="Q7Q1K8">
    <property type="interactions" value="2315"/>
</dbReference>
<dbReference type="STRING" id="7165.Q7Q1K8"/>
<dbReference type="PaxDb" id="7165-AGAP009737-PA"/>
<dbReference type="EnsemblMetazoa" id="AGAP009737-RA">
    <property type="protein sequence ID" value="AGAP009737-PA"/>
    <property type="gene ID" value="AGAP009737"/>
</dbReference>
<dbReference type="GeneID" id="1279146"/>
<dbReference type="KEGG" id="aga:1279146"/>
<dbReference type="CTD" id="34004"/>
<dbReference type="VEuPathDB" id="VectorBase:AGAMI1_000113"/>
<dbReference type="VEuPathDB" id="VectorBase:AGAP009737"/>
<dbReference type="eggNOG" id="KOG0465">
    <property type="taxonomic scope" value="Eukaryota"/>
</dbReference>
<dbReference type="HOGENOM" id="CLU_002794_4_0_1"/>
<dbReference type="InParanoid" id="Q7Q1K8"/>
<dbReference type="OMA" id="GQFAKVQ"/>
<dbReference type="PhylomeDB" id="Q7Q1K8"/>
<dbReference type="UniPathway" id="UPA00345"/>
<dbReference type="Proteomes" id="UP000007062">
    <property type="component" value="Chromosome 3R"/>
</dbReference>
<dbReference type="GO" id="GO:0005739">
    <property type="term" value="C:mitochondrion"/>
    <property type="evidence" value="ECO:0000318"/>
    <property type="project" value="GO_Central"/>
</dbReference>
<dbReference type="GO" id="GO:0005525">
    <property type="term" value="F:GTP binding"/>
    <property type="evidence" value="ECO:0007669"/>
    <property type="project" value="UniProtKB-UniRule"/>
</dbReference>
<dbReference type="GO" id="GO:0003924">
    <property type="term" value="F:GTPase activity"/>
    <property type="evidence" value="ECO:0000250"/>
    <property type="project" value="UniProtKB"/>
</dbReference>
<dbReference type="GO" id="GO:0003746">
    <property type="term" value="F:translation elongation factor activity"/>
    <property type="evidence" value="ECO:0000250"/>
    <property type="project" value="UniProtKB"/>
</dbReference>
<dbReference type="GO" id="GO:0070125">
    <property type="term" value="P:mitochondrial translational elongation"/>
    <property type="evidence" value="ECO:0000250"/>
    <property type="project" value="UniProtKB"/>
</dbReference>
<dbReference type="CDD" id="cd01886">
    <property type="entry name" value="EF-G"/>
    <property type="match status" value="1"/>
</dbReference>
<dbReference type="CDD" id="cd16262">
    <property type="entry name" value="EFG_III"/>
    <property type="match status" value="1"/>
</dbReference>
<dbReference type="CDD" id="cd01434">
    <property type="entry name" value="EFG_mtEFG1_IV"/>
    <property type="match status" value="1"/>
</dbReference>
<dbReference type="CDD" id="cd04097">
    <property type="entry name" value="mtEFG1_C"/>
    <property type="match status" value="1"/>
</dbReference>
<dbReference type="CDD" id="cd04091">
    <property type="entry name" value="mtEFG1_II_like"/>
    <property type="match status" value="1"/>
</dbReference>
<dbReference type="FunFam" id="3.30.230.10:FF:000003">
    <property type="entry name" value="Elongation factor G"/>
    <property type="match status" value="1"/>
</dbReference>
<dbReference type="FunFam" id="3.30.70.240:FF:000001">
    <property type="entry name" value="Elongation factor G"/>
    <property type="match status" value="1"/>
</dbReference>
<dbReference type="FunFam" id="3.30.70.870:FF:000001">
    <property type="entry name" value="Elongation factor G"/>
    <property type="match status" value="1"/>
</dbReference>
<dbReference type="FunFam" id="2.40.30.10:FF:000022">
    <property type="entry name" value="Elongation factor G, mitochondrial"/>
    <property type="match status" value="1"/>
</dbReference>
<dbReference type="FunFam" id="3.40.50.300:FF:000539">
    <property type="entry name" value="Elongation factor G, mitochondrial"/>
    <property type="match status" value="1"/>
</dbReference>
<dbReference type="Gene3D" id="3.30.230.10">
    <property type="match status" value="1"/>
</dbReference>
<dbReference type="Gene3D" id="3.30.70.240">
    <property type="match status" value="1"/>
</dbReference>
<dbReference type="Gene3D" id="3.30.70.870">
    <property type="entry name" value="Elongation Factor G (Translational Gtpase), domain 3"/>
    <property type="match status" value="1"/>
</dbReference>
<dbReference type="Gene3D" id="3.40.50.300">
    <property type="entry name" value="P-loop containing nucleotide triphosphate hydrolases"/>
    <property type="match status" value="1"/>
</dbReference>
<dbReference type="Gene3D" id="2.40.30.10">
    <property type="entry name" value="Translation factors"/>
    <property type="match status" value="1"/>
</dbReference>
<dbReference type="HAMAP" id="MF_00054_B">
    <property type="entry name" value="EF_G_EF_2_B"/>
    <property type="match status" value="1"/>
</dbReference>
<dbReference type="InterPro" id="IPR041095">
    <property type="entry name" value="EFG_II"/>
</dbReference>
<dbReference type="InterPro" id="IPR009022">
    <property type="entry name" value="EFG_III"/>
</dbReference>
<dbReference type="InterPro" id="IPR035647">
    <property type="entry name" value="EFG_III/V"/>
</dbReference>
<dbReference type="InterPro" id="IPR047872">
    <property type="entry name" value="EFG_IV"/>
</dbReference>
<dbReference type="InterPro" id="IPR035649">
    <property type="entry name" value="EFG_V"/>
</dbReference>
<dbReference type="InterPro" id="IPR000640">
    <property type="entry name" value="EFG_V-like"/>
</dbReference>
<dbReference type="InterPro" id="IPR004161">
    <property type="entry name" value="EFTu-like_2"/>
</dbReference>
<dbReference type="InterPro" id="IPR031157">
    <property type="entry name" value="G_TR_CS"/>
</dbReference>
<dbReference type="InterPro" id="IPR027417">
    <property type="entry name" value="P-loop_NTPase"/>
</dbReference>
<dbReference type="InterPro" id="IPR020568">
    <property type="entry name" value="Ribosomal_Su5_D2-typ_SF"/>
</dbReference>
<dbReference type="InterPro" id="IPR014721">
    <property type="entry name" value="Ribsml_uS5_D2-typ_fold_subgr"/>
</dbReference>
<dbReference type="InterPro" id="IPR005225">
    <property type="entry name" value="Small_GTP-bd"/>
</dbReference>
<dbReference type="InterPro" id="IPR000795">
    <property type="entry name" value="T_Tr_GTP-bd_dom"/>
</dbReference>
<dbReference type="InterPro" id="IPR009000">
    <property type="entry name" value="Transl_B-barrel_sf"/>
</dbReference>
<dbReference type="InterPro" id="IPR004540">
    <property type="entry name" value="Transl_elong_EFG/EF2"/>
</dbReference>
<dbReference type="InterPro" id="IPR005517">
    <property type="entry name" value="Transl_elong_EFG/EF2_IV"/>
</dbReference>
<dbReference type="NCBIfam" id="TIGR00484">
    <property type="entry name" value="EF-G"/>
    <property type="match status" value="1"/>
</dbReference>
<dbReference type="NCBIfam" id="NF009381">
    <property type="entry name" value="PRK12740.1-5"/>
    <property type="match status" value="1"/>
</dbReference>
<dbReference type="NCBIfam" id="TIGR00231">
    <property type="entry name" value="small_GTP"/>
    <property type="match status" value="1"/>
</dbReference>
<dbReference type="PANTHER" id="PTHR43636">
    <property type="entry name" value="ELONGATION FACTOR G, MITOCHONDRIAL"/>
    <property type="match status" value="1"/>
</dbReference>
<dbReference type="PANTHER" id="PTHR43636:SF2">
    <property type="entry name" value="ELONGATION FACTOR G, MITOCHONDRIAL"/>
    <property type="match status" value="1"/>
</dbReference>
<dbReference type="Pfam" id="PF00679">
    <property type="entry name" value="EFG_C"/>
    <property type="match status" value="1"/>
</dbReference>
<dbReference type="Pfam" id="PF14492">
    <property type="entry name" value="EFG_III"/>
    <property type="match status" value="1"/>
</dbReference>
<dbReference type="Pfam" id="PF03764">
    <property type="entry name" value="EFG_IV"/>
    <property type="match status" value="1"/>
</dbReference>
<dbReference type="Pfam" id="PF00009">
    <property type="entry name" value="GTP_EFTU"/>
    <property type="match status" value="1"/>
</dbReference>
<dbReference type="Pfam" id="PF03144">
    <property type="entry name" value="GTP_EFTU_D2"/>
    <property type="match status" value="1"/>
</dbReference>
<dbReference type="PRINTS" id="PR00315">
    <property type="entry name" value="ELONGATNFCT"/>
</dbReference>
<dbReference type="SMART" id="SM00838">
    <property type="entry name" value="EFG_C"/>
    <property type="match status" value="1"/>
</dbReference>
<dbReference type="SMART" id="SM00889">
    <property type="entry name" value="EFG_IV"/>
    <property type="match status" value="1"/>
</dbReference>
<dbReference type="SUPFAM" id="SSF54980">
    <property type="entry name" value="EF-G C-terminal domain-like"/>
    <property type="match status" value="2"/>
</dbReference>
<dbReference type="SUPFAM" id="SSF52540">
    <property type="entry name" value="P-loop containing nucleoside triphosphate hydrolases"/>
    <property type="match status" value="1"/>
</dbReference>
<dbReference type="SUPFAM" id="SSF54211">
    <property type="entry name" value="Ribosomal protein S5 domain 2-like"/>
    <property type="match status" value="1"/>
</dbReference>
<dbReference type="SUPFAM" id="SSF50447">
    <property type="entry name" value="Translation proteins"/>
    <property type="match status" value="1"/>
</dbReference>
<dbReference type="PROSITE" id="PS00301">
    <property type="entry name" value="G_TR_1"/>
    <property type="match status" value="1"/>
</dbReference>
<dbReference type="PROSITE" id="PS51722">
    <property type="entry name" value="G_TR_2"/>
    <property type="match status" value="1"/>
</dbReference>
<comment type="function">
    <text evidence="1">Mitochondrial GTPase that catalyzes the GTP-dependent ribosomal translocation step during translation elongation. During this step, the ribosome changes from the pre-translocational (PRE) to the post-translocational (POST) state as the newly formed A-site-bound peptidyl-tRNA and P-site-bound deacylated tRNA move to the P and E sites, respectively. Catalyzes the coordinated movement of the two tRNA molecules, the mRNA and conformational changes in the ribosome.</text>
</comment>
<comment type="pathway">
    <text evidence="1">Protein biosynthesis; polypeptide chain elongation.</text>
</comment>
<comment type="subcellular location">
    <subcellularLocation>
        <location evidence="1">Mitochondrion</location>
    </subcellularLocation>
</comment>
<comment type="similarity">
    <text evidence="2">Belongs to the TRAFAC class translation factor GTPase superfamily. Classic translation factor GTPase family. EF-G/EF-2 subfamily.</text>
</comment>
<keyword id="KW-0251">Elongation factor</keyword>
<keyword id="KW-0342">GTP-binding</keyword>
<keyword id="KW-0496">Mitochondrion</keyword>
<keyword id="KW-0547">Nucleotide-binding</keyword>
<keyword id="KW-0648">Protein biosynthesis</keyword>
<keyword id="KW-1185">Reference proteome</keyword>
<keyword id="KW-0809">Transit peptide</keyword>
<reference key="1">
    <citation type="journal article" date="2002" name="Science">
        <title>The genome sequence of the malaria mosquito Anopheles gambiae.</title>
        <authorList>
            <person name="Holt R.A."/>
            <person name="Subramanian G.M."/>
            <person name="Halpern A."/>
            <person name="Sutton G.G."/>
            <person name="Charlab R."/>
            <person name="Nusskern D.R."/>
            <person name="Wincker P."/>
            <person name="Clark A.G."/>
            <person name="Ribeiro J.M.C."/>
            <person name="Wides R."/>
            <person name="Salzberg S.L."/>
            <person name="Loftus B.J."/>
            <person name="Yandell M.D."/>
            <person name="Majoros W.H."/>
            <person name="Rusch D.B."/>
            <person name="Lai Z."/>
            <person name="Kraft C.L."/>
            <person name="Abril J.F."/>
            <person name="Anthouard V."/>
            <person name="Arensburger P."/>
            <person name="Atkinson P.W."/>
            <person name="Baden H."/>
            <person name="de Berardinis V."/>
            <person name="Baldwin D."/>
            <person name="Benes V."/>
            <person name="Biedler J."/>
            <person name="Blass C."/>
            <person name="Bolanos R."/>
            <person name="Boscus D."/>
            <person name="Barnstead M."/>
            <person name="Cai S."/>
            <person name="Center A."/>
            <person name="Chaturverdi K."/>
            <person name="Christophides G.K."/>
            <person name="Chrystal M.A.M."/>
            <person name="Clamp M."/>
            <person name="Cravchik A."/>
            <person name="Curwen V."/>
            <person name="Dana A."/>
            <person name="Delcher A."/>
            <person name="Dew I."/>
            <person name="Evans C.A."/>
            <person name="Flanigan M."/>
            <person name="Grundschober-Freimoser A."/>
            <person name="Friedli L."/>
            <person name="Gu Z."/>
            <person name="Guan P."/>
            <person name="Guigo R."/>
            <person name="Hillenmeyer M.E."/>
            <person name="Hladun S.L."/>
            <person name="Hogan J.R."/>
            <person name="Hong Y.S."/>
            <person name="Hoover J."/>
            <person name="Jaillon O."/>
            <person name="Ke Z."/>
            <person name="Kodira C.D."/>
            <person name="Kokoza E."/>
            <person name="Koutsos A."/>
            <person name="Letunic I."/>
            <person name="Levitsky A.A."/>
            <person name="Liang Y."/>
            <person name="Lin J.-J."/>
            <person name="Lobo N.F."/>
            <person name="Lopez J.R."/>
            <person name="Malek J.A."/>
            <person name="McIntosh T.C."/>
            <person name="Meister S."/>
            <person name="Miller J.R."/>
            <person name="Mobarry C."/>
            <person name="Mongin E."/>
            <person name="Murphy S.D."/>
            <person name="O'Brochta D.A."/>
            <person name="Pfannkoch C."/>
            <person name="Qi R."/>
            <person name="Regier M.A."/>
            <person name="Remington K."/>
            <person name="Shao H."/>
            <person name="Sharakhova M.V."/>
            <person name="Sitter C.D."/>
            <person name="Shetty J."/>
            <person name="Smith T.J."/>
            <person name="Strong R."/>
            <person name="Sun J."/>
            <person name="Thomasova D."/>
            <person name="Ton L.Q."/>
            <person name="Topalis P."/>
            <person name="Tu Z.J."/>
            <person name="Unger M.F."/>
            <person name="Walenz B."/>
            <person name="Wang A.H."/>
            <person name="Wang J."/>
            <person name="Wang M."/>
            <person name="Wang X."/>
            <person name="Woodford K.J."/>
            <person name="Wortman J.R."/>
            <person name="Wu M."/>
            <person name="Yao A."/>
            <person name="Zdobnov E.M."/>
            <person name="Zhang H."/>
            <person name="Zhao Q."/>
            <person name="Zhao S."/>
            <person name="Zhu S.C."/>
            <person name="Zhimulev I."/>
            <person name="Coluzzi M."/>
            <person name="della Torre A."/>
            <person name="Roth C.W."/>
            <person name="Louis C."/>
            <person name="Kalush F."/>
            <person name="Mural R.J."/>
            <person name="Myers E.W."/>
            <person name="Adams M.D."/>
            <person name="Smith H.O."/>
            <person name="Broder S."/>
            <person name="Gardner M.J."/>
            <person name="Fraser C.M."/>
            <person name="Birney E."/>
            <person name="Bork P."/>
            <person name="Brey P.T."/>
            <person name="Venter J.C."/>
            <person name="Weissenbach J."/>
            <person name="Kafatos F.C."/>
            <person name="Collins F.H."/>
            <person name="Hoffman S.L."/>
        </authorList>
    </citation>
    <scope>NUCLEOTIDE SEQUENCE [LARGE SCALE GENOMIC DNA]</scope>
    <source>
        <strain>PEST</strain>
    </source>
</reference>
<sequence>MTISNLIRSRCSLAAAKSFLENVKSFSSHATFAEHKQLEKIRNIGISAHIDSGKTTLTERILFYTGRIKEMHEVKGKDNVGATMDSMELERQRGITIQSAATYTIWKDHNINIIDTPGHVDFTVEVERALRVLDGAVLVLCSVGGVQSQTLTVNRQMKRYNVPCLAFINKLDRSGANPYRVLGQMRSKLNHNAAFVQLPIGVESNCKGVIDLVKQRALYFEEPYGLKIREDEIPADMRTESAERRQELIEHLSNVDEKIGELFLEEREATVEDIMGAIRRSTLKRAFTPVLVGTALKNKGVQPLLDAVLDYLPHPGEVENVALVEKKDEEPQKVPLNPARDGKDPFVGLAFKLEAGRFGQLTYLRCYQGVLRKGDNIFNTRSGKKIRLARLVRLHSNQMEDVNEVYAGDIFALFGVDCASGDTFVTNPKLELSMESIFVPDPVVSMAIKPTNSKDRDNFAKAIARFTKEDPTFHFEYDADVKETLVSGMGELHLEIYAQRMEREYNCPVTLGKPKVAFRETLIGPCEFDYLHKKQSGGQGQYARVSGILEPLPPHQNTTIEFVDETMGTNVPKQFIPGIEKGFRQMAEKGLLSGHKLSGIKFRLQDGAHHIVDSSELAFMLAAQGAIKSVFENGSWQILEPIMMVEVTAPEEFQGTVIGQLNKRHGIITGTEGAEGWFTVYAEVPLNDMFGYAGELRSSTQGKGEFSMEYSRYSPCMPEVQEKLCHEYQVSQGLVVDKKQKKKN</sequence>
<accession>Q7Q1K8</accession>
<protein>
    <recommendedName>
        <fullName evidence="1">Elongation factor G, mitochondrial</fullName>
        <shortName evidence="1">EF-Gmt</shortName>
    </recommendedName>
    <alternativeName>
        <fullName evidence="1">Elongation factor G 1, mitochondrial</fullName>
        <shortName evidence="1">mEF-G 1</shortName>
    </alternativeName>
    <alternativeName>
        <fullName evidence="1">Elongation factor G1</fullName>
    </alternativeName>
</protein>